<evidence type="ECO:0000255" key="1">
    <source>
        <dbReference type="HAMAP-Rule" id="MF_00733"/>
    </source>
</evidence>
<sequence>MVVAYKHEPFTDFSVEANKLAFEEGLKKVESYLGQDYPLIIGGEKITTEDKIVSVNPANKEELVGRVSKASRELAEKAMQVADETFQTWRKSKPEMRADILFRAAAIVRRRKHEFSAILVKEAGKPWNEADADTAEAIDFMEYYGRQMLKLKDGIPVESRPIEYNRFSYIPLGVGVIISPWNFPFAIMAGMTTAALVSGNTVLLKPASTTPVVAAKFMEVLEEAGLPAGVVNFVPGNGSEVGDYLVDHPRTRFISFTGSRDVGIRIYERAAKVNPGQIWLKRVIAEMGGKDTIVVDKEADLELAAKSIVASAFGFSGQKCSACSRAVIHEDVYDHVLNRAVELTKELTVANPAVLGTNMGPVNDQAAFDKVMSYVAIGKEEGRILAGGEGDDSKGWFIQPTIVADVAEDARLMKEEIFGPVVAFCKAKDFDHALAIANNTEYGLTGAVISNNRDHIEKAREDFHVGNLYFNRGCTGAIVGYQPFGGFNMSGTDSKAGGPDYLALHMQAKTTSETL</sequence>
<keyword id="KW-0520">NAD</keyword>
<keyword id="KW-0560">Oxidoreductase</keyword>
<dbReference type="EC" id="1.2.1.88" evidence="1"/>
<dbReference type="EMBL" id="CP001215">
    <property type="protein sequence ID" value="ACP13077.1"/>
    <property type="molecule type" value="Genomic_DNA"/>
</dbReference>
<dbReference type="SMR" id="C3L546"/>
<dbReference type="KEGG" id="bah:BAMEG_0366"/>
<dbReference type="HOGENOM" id="CLU_005391_0_0_9"/>
<dbReference type="UniPathway" id="UPA00261">
    <property type="reaction ID" value="UER00374"/>
</dbReference>
<dbReference type="GO" id="GO:0009898">
    <property type="term" value="C:cytoplasmic side of plasma membrane"/>
    <property type="evidence" value="ECO:0007669"/>
    <property type="project" value="TreeGrafter"/>
</dbReference>
<dbReference type="GO" id="GO:0003842">
    <property type="term" value="F:1-pyrroline-5-carboxylate dehydrogenase activity"/>
    <property type="evidence" value="ECO:0007669"/>
    <property type="project" value="UniProtKB-UniRule"/>
</dbReference>
<dbReference type="GO" id="GO:0006537">
    <property type="term" value="P:glutamate biosynthetic process"/>
    <property type="evidence" value="ECO:0007669"/>
    <property type="project" value="UniProtKB-UniRule"/>
</dbReference>
<dbReference type="GO" id="GO:0010133">
    <property type="term" value="P:proline catabolic process to glutamate"/>
    <property type="evidence" value="ECO:0007669"/>
    <property type="project" value="UniProtKB-UniPathway"/>
</dbReference>
<dbReference type="CDD" id="cd07124">
    <property type="entry name" value="ALDH_PutA-P5CDH-RocA"/>
    <property type="match status" value="1"/>
</dbReference>
<dbReference type="FunFam" id="3.40.309.10:FF:000005">
    <property type="entry name" value="1-pyrroline-5-carboxylate dehydrogenase 1"/>
    <property type="match status" value="1"/>
</dbReference>
<dbReference type="FunFam" id="3.40.605.10:FF:000045">
    <property type="entry name" value="1-pyrroline-5-carboxylate dehydrogenase 1"/>
    <property type="match status" value="1"/>
</dbReference>
<dbReference type="Gene3D" id="3.40.605.10">
    <property type="entry name" value="Aldehyde Dehydrogenase, Chain A, domain 1"/>
    <property type="match status" value="1"/>
</dbReference>
<dbReference type="Gene3D" id="3.40.309.10">
    <property type="entry name" value="Aldehyde Dehydrogenase, Chain A, domain 2"/>
    <property type="match status" value="1"/>
</dbReference>
<dbReference type="HAMAP" id="MF_00733">
    <property type="entry name" value="RocA"/>
    <property type="match status" value="1"/>
</dbReference>
<dbReference type="InterPro" id="IPR016161">
    <property type="entry name" value="Ald_DH/histidinol_DH"/>
</dbReference>
<dbReference type="InterPro" id="IPR016163">
    <property type="entry name" value="Ald_DH_C"/>
</dbReference>
<dbReference type="InterPro" id="IPR016160">
    <property type="entry name" value="Ald_DH_CS_CYS"/>
</dbReference>
<dbReference type="InterPro" id="IPR029510">
    <property type="entry name" value="Ald_DH_CS_GLU"/>
</dbReference>
<dbReference type="InterPro" id="IPR016162">
    <property type="entry name" value="Ald_DH_N"/>
</dbReference>
<dbReference type="InterPro" id="IPR015590">
    <property type="entry name" value="Aldehyde_DH_dom"/>
</dbReference>
<dbReference type="InterPro" id="IPR050485">
    <property type="entry name" value="Proline_metab_enzyme"/>
</dbReference>
<dbReference type="InterPro" id="IPR005932">
    <property type="entry name" value="RocA"/>
</dbReference>
<dbReference type="InterPro" id="IPR047597">
    <property type="entry name" value="RocA_bacillales"/>
</dbReference>
<dbReference type="NCBIfam" id="TIGR01237">
    <property type="entry name" value="D1pyr5carbox2"/>
    <property type="match status" value="1"/>
</dbReference>
<dbReference type="NCBIfam" id="NF002852">
    <property type="entry name" value="PRK03137.1"/>
    <property type="match status" value="1"/>
</dbReference>
<dbReference type="PANTHER" id="PTHR42862">
    <property type="entry name" value="DELTA-1-PYRROLINE-5-CARBOXYLATE DEHYDROGENASE 1, ISOFORM A-RELATED"/>
    <property type="match status" value="1"/>
</dbReference>
<dbReference type="PANTHER" id="PTHR42862:SF1">
    <property type="entry name" value="DELTA-1-PYRROLINE-5-CARBOXYLATE DEHYDROGENASE 2, ISOFORM A-RELATED"/>
    <property type="match status" value="1"/>
</dbReference>
<dbReference type="Pfam" id="PF00171">
    <property type="entry name" value="Aldedh"/>
    <property type="match status" value="1"/>
</dbReference>
<dbReference type="SUPFAM" id="SSF53720">
    <property type="entry name" value="ALDH-like"/>
    <property type="match status" value="1"/>
</dbReference>
<dbReference type="PROSITE" id="PS00070">
    <property type="entry name" value="ALDEHYDE_DEHYDR_CYS"/>
    <property type="match status" value="1"/>
</dbReference>
<dbReference type="PROSITE" id="PS00687">
    <property type="entry name" value="ALDEHYDE_DEHYDR_GLU"/>
    <property type="match status" value="1"/>
</dbReference>
<reference key="1">
    <citation type="submission" date="2008-10" db="EMBL/GenBank/DDBJ databases">
        <title>Genome sequence of Bacillus anthracis str. CDC 684.</title>
        <authorList>
            <person name="Dodson R.J."/>
            <person name="Munk A.C."/>
            <person name="Brettin T."/>
            <person name="Bruce D."/>
            <person name="Detter C."/>
            <person name="Tapia R."/>
            <person name="Han C."/>
            <person name="Sutton G."/>
            <person name="Sims D."/>
        </authorList>
    </citation>
    <scope>NUCLEOTIDE SEQUENCE [LARGE SCALE GENOMIC DNA]</scope>
    <source>
        <strain>CDC 684 / NRRL 3495</strain>
    </source>
</reference>
<gene>
    <name evidence="1" type="primary">rocA</name>
    <name type="ordered locus">BAMEG_0366</name>
</gene>
<accession>C3L546</accession>
<name>ROCA_BACAC</name>
<organism>
    <name type="scientific">Bacillus anthracis (strain CDC 684 / NRRL 3495)</name>
    <dbReference type="NCBI Taxonomy" id="568206"/>
    <lineage>
        <taxon>Bacteria</taxon>
        <taxon>Bacillati</taxon>
        <taxon>Bacillota</taxon>
        <taxon>Bacilli</taxon>
        <taxon>Bacillales</taxon>
        <taxon>Bacillaceae</taxon>
        <taxon>Bacillus</taxon>
        <taxon>Bacillus cereus group</taxon>
    </lineage>
</organism>
<proteinExistence type="inferred from homology"/>
<protein>
    <recommendedName>
        <fullName evidence="1">1-pyrroline-5-carboxylate dehydrogenase</fullName>
        <shortName evidence="1">P5C dehydrogenase</shortName>
        <ecNumber evidence="1">1.2.1.88</ecNumber>
    </recommendedName>
    <alternativeName>
        <fullName evidence="1">L-glutamate gamma-semialdehyde dehydrogenase</fullName>
    </alternativeName>
</protein>
<comment type="catalytic activity">
    <reaction evidence="1">
        <text>L-glutamate 5-semialdehyde + NAD(+) + H2O = L-glutamate + NADH + 2 H(+)</text>
        <dbReference type="Rhea" id="RHEA:30235"/>
        <dbReference type="ChEBI" id="CHEBI:15377"/>
        <dbReference type="ChEBI" id="CHEBI:15378"/>
        <dbReference type="ChEBI" id="CHEBI:29985"/>
        <dbReference type="ChEBI" id="CHEBI:57540"/>
        <dbReference type="ChEBI" id="CHEBI:57945"/>
        <dbReference type="ChEBI" id="CHEBI:58066"/>
        <dbReference type="EC" id="1.2.1.88"/>
    </reaction>
</comment>
<comment type="pathway">
    <text evidence="1">Amino-acid degradation; L-proline degradation into L-glutamate; L-glutamate from L-proline: step 2/2.</text>
</comment>
<comment type="similarity">
    <text evidence="1">Belongs to the aldehyde dehydrogenase family. RocA subfamily.</text>
</comment>
<feature type="chain" id="PRO_1000148096" description="1-pyrroline-5-carboxylate dehydrogenase">
    <location>
        <begin position="1"/>
        <end position="515"/>
    </location>
</feature>
<feature type="active site" evidence="1">
    <location>
        <position position="286"/>
    </location>
</feature>
<feature type="active site" evidence="1">
    <location>
        <position position="320"/>
    </location>
</feature>